<comment type="function">
    <text evidence="1">Catalyzes a salvage reaction resulting in the formation of AMP, that is energically less costly than de novo synthesis.</text>
</comment>
<comment type="catalytic activity">
    <reaction evidence="1">
        <text>AMP + diphosphate = 5-phospho-alpha-D-ribose 1-diphosphate + adenine</text>
        <dbReference type="Rhea" id="RHEA:16609"/>
        <dbReference type="ChEBI" id="CHEBI:16708"/>
        <dbReference type="ChEBI" id="CHEBI:33019"/>
        <dbReference type="ChEBI" id="CHEBI:58017"/>
        <dbReference type="ChEBI" id="CHEBI:456215"/>
        <dbReference type="EC" id="2.4.2.7"/>
    </reaction>
</comment>
<comment type="pathway">
    <text evidence="1">Purine metabolism; AMP biosynthesis via salvage pathway; AMP from adenine: step 1/1.</text>
</comment>
<comment type="subunit">
    <text evidence="1">Homodimer.</text>
</comment>
<comment type="subcellular location">
    <subcellularLocation>
        <location evidence="1">Cytoplasm</location>
    </subcellularLocation>
</comment>
<comment type="similarity">
    <text evidence="1">Belongs to the purine/pyrimidine phosphoribosyltransferase family.</text>
</comment>
<comment type="sequence caution" evidence="2">
    <conflict type="erroneous initiation">
        <sequence resource="EMBL-CDS" id="ACI51810"/>
    </conflict>
</comment>
<reference key="1">
    <citation type="journal article" date="2009" name="BMC Genomics">
        <title>Complete genome sequence of the sugarcane nitrogen-fixing endophyte Gluconacetobacter diazotrophicus Pal5.</title>
        <authorList>
            <person name="Bertalan M."/>
            <person name="Albano R."/>
            <person name="de Padua V."/>
            <person name="Rouws L."/>
            <person name="Rojas C."/>
            <person name="Hemerly A."/>
            <person name="Teixeira K."/>
            <person name="Schwab S."/>
            <person name="Araujo J."/>
            <person name="Oliveira A."/>
            <person name="Franca L."/>
            <person name="Magalhaes V."/>
            <person name="Alqueres S."/>
            <person name="Cardoso A."/>
            <person name="Almeida W."/>
            <person name="Loureiro M.M."/>
            <person name="Nogueira E."/>
            <person name="Cidade D."/>
            <person name="Oliveira D."/>
            <person name="Simao T."/>
            <person name="Macedo J."/>
            <person name="Valadao A."/>
            <person name="Dreschsel M."/>
            <person name="Freitas F."/>
            <person name="Vidal M."/>
            <person name="Guedes H."/>
            <person name="Rodrigues E."/>
            <person name="Meneses C."/>
            <person name="Brioso P."/>
            <person name="Pozzer L."/>
            <person name="Figueiredo D."/>
            <person name="Montano H."/>
            <person name="Junior J."/>
            <person name="de Souza Filho G."/>
            <person name="Martin Quintana Flores V."/>
            <person name="Ferreira B."/>
            <person name="Branco A."/>
            <person name="Gonzalez P."/>
            <person name="Guillobel H."/>
            <person name="Lemos M."/>
            <person name="Seibel L."/>
            <person name="Macedo J."/>
            <person name="Alves-Ferreira M."/>
            <person name="Sachetto-Martins G."/>
            <person name="Coelho A."/>
            <person name="Santos E."/>
            <person name="Amaral G."/>
            <person name="Neves A."/>
            <person name="Pacheco A.B."/>
            <person name="Carvalho D."/>
            <person name="Lery L."/>
            <person name="Bisch P."/>
            <person name="Rossle S.C."/>
            <person name="Urmenyi T."/>
            <person name="Rael Pereira A."/>
            <person name="Silva R."/>
            <person name="Rondinelli E."/>
            <person name="von Kruger W."/>
            <person name="Martins O."/>
            <person name="Baldani J.I."/>
            <person name="Ferreira P.C."/>
        </authorList>
    </citation>
    <scope>NUCLEOTIDE SEQUENCE [LARGE SCALE GENOMIC DNA]</scope>
    <source>
        <strain>ATCC 49037 / DSM 5601 / CCUG 37298 / CIP 103539 / LMG 7603 / PAl5</strain>
    </source>
</reference>
<reference key="2">
    <citation type="journal article" date="2010" name="Stand. Genomic Sci.">
        <title>Two genome sequences of the same bacterial strain, Gluconacetobacter diazotrophicus PAl 5, suggest a new standard in genome sequence submission.</title>
        <authorList>
            <person name="Giongo A."/>
            <person name="Tyler H.L."/>
            <person name="Zipperer U.N."/>
            <person name="Triplett E.W."/>
        </authorList>
    </citation>
    <scope>NUCLEOTIDE SEQUENCE [LARGE SCALE GENOMIC DNA]</scope>
    <source>
        <strain>ATCC 49037 / DSM 5601 / CCUG 37298 / CIP 103539 / LMG 7603 / PAl5</strain>
    </source>
</reference>
<organism>
    <name type="scientific">Gluconacetobacter diazotrophicus (strain ATCC 49037 / DSM 5601 / CCUG 37298 / CIP 103539 / LMG 7603 / PAl5)</name>
    <dbReference type="NCBI Taxonomy" id="272568"/>
    <lineage>
        <taxon>Bacteria</taxon>
        <taxon>Pseudomonadati</taxon>
        <taxon>Pseudomonadota</taxon>
        <taxon>Alphaproteobacteria</taxon>
        <taxon>Acetobacterales</taxon>
        <taxon>Acetobacteraceae</taxon>
        <taxon>Gluconacetobacter</taxon>
    </lineage>
</organism>
<keyword id="KW-0963">Cytoplasm</keyword>
<keyword id="KW-0328">Glycosyltransferase</keyword>
<keyword id="KW-0660">Purine salvage</keyword>
<keyword id="KW-1185">Reference proteome</keyword>
<keyword id="KW-0808">Transferase</keyword>
<proteinExistence type="inferred from homology"/>
<evidence type="ECO:0000255" key="1">
    <source>
        <dbReference type="HAMAP-Rule" id="MF_00004"/>
    </source>
</evidence>
<evidence type="ECO:0000305" key="2"/>
<name>APT_GLUDA</name>
<protein>
    <recommendedName>
        <fullName evidence="1">Adenine phosphoribosyltransferase</fullName>
        <shortName evidence="1">APRT</shortName>
        <ecNumber evidence="1">2.4.2.7</ecNumber>
    </recommendedName>
</protein>
<sequence length="176" mass="18790">MTTATMDLKQHIRGIPDFPKPGILFYDISTLMRNADAWQVAMGRLTHAVAPWAPDMLAAIESRGFLTAAPLASNLGCGLVMLRKPGKLPGETVSHTYDLEYGSDTLHIQADAIRPGQRVVVMDDLLATGGTLAASVALLRKVGADVVGASVLVELRALGGRQRLDVPVQALISYDD</sequence>
<gene>
    <name evidence="1" type="primary">apt</name>
    <name type="ordered locus">GDI1344</name>
    <name type="ordered locus">Gdia_2050</name>
</gene>
<accession>A9HEW1</accession>
<accession>B5ZDI0</accession>
<feature type="chain" id="PRO_0000329346" description="Adenine phosphoribosyltransferase">
    <location>
        <begin position="1"/>
        <end position="176"/>
    </location>
</feature>
<dbReference type="EC" id="2.4.2.7" evidence="1"/>
<dbReference type="EMBL" id="AM889285">
    <property type="protein sequence ID" value="CAP55287.1"/>
    <property type="molecule type" value="Genomic_DNA"/>
</dbReference>
<dbReference type="EMBL" id="CP001189">
    <property type="protein sequence ID" value="ACI51810.1"/>
    <property type="status" value="ALT_INIT"/>
    <property type="molecule type" value="Genomic_DNA"/>
</dbReference>
<dbReference type="RefSeq" id="WP_012224590.1">
    <property type="nucleotide sequence ID" value="NC_010125.1"/>
</dbReference>
<dbReference type="SMR" id="A9HEW1"/>
<dbReference type="STRING" id="272568.GDI1344"/>
<dbReference type="KEGG" id="gdi:GDI1344"/>
<dbReference type="KEGG" id="gdj:Gdia_2050"/>
<dbReference type="eggNOG" id="COG0503">
    <property type="taxonomic scope" value="Bacteria"/>
</dbReference>
<dbReference type="HOGENOM" id="CLU_063339_3_3_5"/>
<dbReference type="OrthoDB" id="9803963at2"/>
<dbReference type="UniPathway" id="UPA00588">
    <property type="reaction ID" value="UER00646"/>
</dbReference>
<dbReference type="Proteomes" id="UP000001176">
    <property type="component" value="Chromosome"/>
</dbReference>
<dbReference type="GO" id="GO:0005737">
    <property type="term" value="C:cytoplasm"/>
    <property type="evidence" value="ECO:0007669"/>
    <property type="project" value="UniProtKB-SubCell"/>
</dbReference>
<dbReference type="GO" id="GO:0002055">
    <property type="term" value="F:adenine binding"/>
    <property type="evidence" value="ECO:0007669"/>
    <property type="project" value="TreeGrafter"/>
</dbReference>
<dbReference type="GO" id="GO:0003999">
    <property type="term" value="F:adenine phosphoribosyltransferase activity"/>
    <property type="evidence" value="ECO:0007669"/>
    <property type="project" value="UniProtKB-UniRule"/>
</dbReference>
<dbReference type="GO" id="GO:0016208">
    <property type="term" value="F:AMP binding"/>
    <property type="evidence" value="ECO:0007669"/>
    <property type="project" value="TreeGrafter"/>
</dbReference>
<dbReference type="GO" id="GO:0006168">
    <property type="term" value="P:adenine salvage"/>
    <property type="evidence" value="ECO:0007669"/>
    <property type="project" value="InterPro"/>
</dbReference>
<dbReference type="GO" id="GO:0044209">
    <property type="term" value="P:AMP salvage"/>
    <property type="evidence" value="ECO:0007669"/>
    <property type="project" value="UniProtKB-UniRule"/>
</dbReference>
<dbReference type="GO" id="GO:0006166">
    <property type="term" value="P:purine ribonucleoside salvage"/>
    <property type="evidence" value="ECO:0007669"/>
    <property type="project" value="UniProtKB-KW"/>
</dbReference>
<dbReference type="CDD" id="cd06223">
    <property type="entry name" value="PRTases_typeI"/>
    <property type="match status" value="1"/>
</dbReference>
<dbReference type="FunFam" id="3.40.50.2020:FF:000004">
    <property type="entry name" value="Adenine phosphoribosyltransferase"/>
    <property type="match status" value="1"/>
</dbReference>
<dbReference type="Gene3D" id="3.40.50.2020">
    <property type="match status" value="1"/>
</dbReference>
<dbReference type="HAMAP" id="MF_00004">
    <property type="entry name" value="Aden_phosphoribosyltr"/>
    <property type="match status" value="1"/>
</dbReference>
<dbReference type="InterPro" id="IPR005764">
    <property type="entry name" value="Ade_phspho_trans"/>
</dbReference>
<dbReference type="InterPro" id="IPR000836">
    <property type="entry name" value="PRibTrfase_dom"/>
</dbReference>
<dbReference type="InterPro" id="IPR029057">
    <property type="entry name" value="PRTase-like"/>
</dbReference>
<dbReference type="InterPro" id="IPR050054">
    <property type="entry name" value="UPRTase/APRTase"/>
</dbReference>
<dbReference type="NCBIfam" id="TIGR01090">
    <property type="entry name" value="apt"/>
    <property type="match status" value="1"/>
</dbReference>
<dbReference type="NCBIfam" id="NF002634">
    <property type="entry name" value="PRK02304.1-3"/>
    <property type="match status" value="1"/>
</dbReference>
<dbReference type="NCBIfam" id="NF002636">
    <property type="entry name" value="PRK02304.1-5"/>
    <property type="match status" value="1"/>
</dbReference>
<dbReference type="PANTHER" id="PTHR32315">
    <property type="entry name" value="ADENINE PHOSPHORIBOSYLTRANSFERASE"/>
    <property type="match status" value="1"/>
</dbReference>
<dbReference type="PANTHER" id="PTHR32315:SF3">
    <property type="entry name" value="ADENINE PHOSPHORIBOSYLTRANSFERASE"/>
    <property type="match status" value="1"/>
</dbReference>
<dbReference type="Pfam" id="PF00156">
    <property type="entry name" value="Pribosyltran"/>
    <property type="match status" value="1"/>
</dbReference>
<dbReference type="SUPFAM" id="SSF53271">
    <property type="entry name" value="PRTase-like"/>
    <property type="match status" value="1"/>
</dbReference>
<dbReference type="PROSITE" id="PS00103">
    <property type="entry name" value="PUR_PYR_PR_TRANSFER"/>
    <property type="match status" value="1"/>
</dbReference>